<sequence length="144" mass="16850">MAFEMRPEWKKFRYRGRTLEELLKMDIEELARLFPARQRRSLLRGLTPAQQKLLLKVRKIRRRLEEGRLKRPPVIRTHVRDMVILPEMVGLTIAVYNGKEFIPVKIVPEMIGHYLGEFSPTTRIVQHGEPGLKATRSSLHVASK</sequence>
<dbReference type="EMBL" id="BA000002">
    <property type="protein sequence ID" value="BAA79322.2"/>
    <property type="molecule type" value="Genomic_DNA"/>
</dbReference>
<dbReference type="PIR" id="F72728">
    <property type="entry name" value="F72728"/>
</dbReference>
<dbReference type="SMR" id="Q9YF74"/>
<dbReference type="STRING" id="272557.APE_0367.1"/>
<dbReference type="EnsemblBacteria" id="BAA79322">
    <property type="protein sequence ID" value="BAA79322"/>
    <property type="gene ID" value="APE_0367.1"/>
</dbReference>
<dbReference type="KEGG" id="ape:APE_0367.1"/>
<dbReference type="PATRIC" id="fig|272557.25.peg.282"/>
<dbReference type="eggNOG" id="arCOG04099">
    <property type="taxonomic scope" value="Archaea"/>
</dbReference>
<dbReference type="Proteomes" id="UP000002518">
    <property type="component" value="Chromosome"/>
</dbReference>
<dbReference type="GO" id="GO:0022627">
    <property type="term" value="C:cytosolic small ribosomal subunit"/>
    <property type="evidence" value="ECO:0007669"/>
    <property type="project" value="TreeGrafter"/>
</dbReference>
<dbReference type="GO" id="GO:0019843">
    <property type="term" value="F:rRNA binding"/>
    <property type="evidence" value="ECO:0007669"/>
    <property type="project" value="UniProtKB-UniRule"/>
</dbReference>
<dbReference type="GO" id="GO:0003735">
    <property type="term" value="F:structural constituent of ribosome"/>
    <property type="evidence" value="ECO:0007669"/>
    <property type="project" value="InterPro"/>
</dbReference>
<dbReference type="GO" id="GO:0000028">
    <property type="term" value="P:ribosomal small subunit assembly"/>
    <property type="evidence" value="ECO:0007669"/>
    <property type="project" value="TreeGrafter"/>
</dbReference>
<dbReference type="GO" id="GO:0006412">
    <property type="term" value="P:translation"/>
    <property type="evidence" value="ECO:0007669"/>
    <property type="project" value="UniProtKB-UniRule"/>
</dbReference>
<dbReference type="FunFam" id="3.30.860.10:FF:000002">
    <property type="entry name" value="40S ribosomal protein S15"/>
    <property type="match status" value="1"/>
</dbReference>
<dbReference type="Gene3D" id="3.30.860.10">
    <property type="entry name" value="30s Ribosomal Protein S19, Chain A"/>
    <property type="match status" value="1"/>
</dbReference>
<dbReference type="HAMAP" id="MF_00531">
    <property type="entry name" value="Ribosomal_uS19"/>
    <property type="match status" value="1"/>
</dbReference>
<dbReference type="InterPro" id="IPR002222">
    <property type="entry name" value="Ribosomal_uS19"/>
</dbReference>
<dbReference type="InterPro" id="IPR020934">
    <property type="entry name" value="Ribosomal_uS19_CS"/>
</dbReference>
<dbReference type="InterPro" id="IPR005713">
    <property type="entry name" value="Ribosomal_uS19_euk/arc"/>
</dbReference>
<dbReference type="InterPro" id="IPR023575">
    <property type="entry name" value="Ribosomal_uS19_SF"/>
</dbReference>
<dbReference type="NCBIfam" id="NF003121">
    <property type="entry name" value="PRK04038.1"/>
    <property type="match status" value="1"/>
</dbReference>
<dbReference type="NCBIfam" id="TIGR01025">
    <property type="entry name" value="uS19_arch"/>
    <property type="match status" value="1"/>
</dbReference>
<dbReference type="PANTHER" id="PTHR11880">
    <property type="entry name" value="RIBOSOMAL PROTEIN S19P FAMILY MEMBER"/>
    <property type="match status" value="1"/>
</dbReference>
<dbReference type="PANTHER" id="PTHR11880:SF2">
    <property type="entry name" value="SMALL RIBOSOMAL SUBUNIT PROTEIN US19"/>
    <property type="match status" value="1"/>
</dbReference>
<dbReference type="Pfam" id="PF00203">
    <property type="entry name" value="Ribosomal_S19"/>
    <property type="match status" value="1"/>
</dbReference>
<dbReference type="PIRSF" id="PIRSF002144">
    <property type="entry name" value="Ribosomal_S19"/>
    <property type="match status" value="1"/>
</dbReference>
<dbReference type="PRINTS" id="PR00975">
    <property type="entry name" value="RIBOSOMALS19"/>
</dbReference>
<dbReference type="SUPFAM" id="SSF54570">
    <property type="entry name" value="Ribosomal protein S19"/>
    <property type="match status" value="1"/>
</dbReference>
<dbReference type="PROSITE" id="PS00323">
    <property type="entry name" value="RIBOSOMAL_S19"/>
    <property type="match status" value="1"/>
</dbReference>
<feature type="chain" id="PRO_0000129997" description="Small ribosomal subunit protein uS19">
    <location>
        <begin position="1"/>
        <end position="144"/>
    </location>
</feature>
<reference key="1">
    <citation type="journal article" date="1999" name="DNA Res.">
        <title>Complete genome sequence of an aerobic hyper-thermophilic crenarchaeon, Aeropyrum pernix K1.</title>
        <authorList>
            <person name="Kawarabayasi Y."/>
            <person name="Hino Y."/>
            <person name="Horikawa H."/>
            <person name="Yamazaki S."/>
            <person name="Haikawa Y."/>
            <person name="Jin-no K."/>
            <person name="Takahashi M."/>
            <person name="Sekine M."/>
            <person name="Baba S."/>
            <person name="Ankai A."/>
            <person name="Kosugi H."/>
            <person name="Hosoyama A."/>
            <person name="Fukui S."/>
            <person name="Nagai Y."/>
            <person name="Nishijima K."/>
            <person name="Nakazawa H."/>
            <person name="Takamiya M."/>
            <person name="Masuda S."/>
            <person name="Funahashi T."/>
            <person name="Tanaka T."/>
            <person name="Kudoh Y."/>
            <person name="Yamazaki J."/>
            <person name="Kushida N."/>
            <person name="Oguchi A."/>
            <person name="Aoki K."/>
            <person name="Kubota K."/>
            <person name="Nakamura Y."/>
            <person name="Nomura N."/>
            <person name="Sako Y."/>
            <person name="Kikuchi H."/>
        </authorList>
    </citation>
    <scope>NUCLEOTIDE SEQUENCE [LARGE SCALE GENOMIC DNA]</scope>
    <source>
        <strain>ATCC 700893 / DSM 11879 / JCM 9820 / NBRC 100138 / K1</strain>
    </source>
</reference>
<protein>
    <recommendedName>
        <fullName evidence="2">Small ribosomal subunit protein uS19</fullName>
    </recommendedName>
    <alternativeName>
        <fullName>30S ribosomal protein S19</fullName>
    </alternativeName>
</protein>
<comment type="function">
    <text evidence="1">Protein S19 forms a complex with S13 that binds strongly to the 16S ribosomal RNA.</text>
</comment>
<comment type="similarity">
    <text evidence="2">Belongs to the universal ribosomal protein uS19 family.</text>
</comment>
<organism>
    <name type="scientific">Aeropyrum pernix (strain ATCC 700893 / DSM 11879 / JCM 9820 / NBRC 100138 / K1)</name>
    <dbReference type="NCBI Taxonomy" id="272557"/>
    <lineage>
        <taxon>Archaea</taxon>
        <taxon>Thermoproteota</taxon>
        <taxon>Thermoprotei</taxon>
        <taxon>Desulfurococcales</taxon>
        <taxon>Desulfurococcaceae</taxon>
        <taxon>Aeropyrum</taxon>
    </lineage>
</organism>
<accession>Q9YF74</accession>
<proteinExistence type="inferred from homology"/>
<keyword id="KW-1185">Reference proteome</keyword>
<keyword id="KW-0687">Ribonucleoprotein</keyword>
<keyword id="KW-0689">Ribosomal protein</keyword>
<keyword id="KW-0694">RNA-binding</keyword>
<keyword id="KW-0699">rRNA-binding</keyword>
<evidence type="ECO:0000250" key="1"/>
<evidence type="ECO:0000305" key="2"/>
<name>RS19_AERPE</name>
<gene>
    <name type="primary">rps19</name>
    <name type="ordered locus">APE_0367.1</name>
</gene>